<accession>P0C673</accession>
<reference key="1">
    <citation type="journal article" date="2002" name="Biochem. Biophys. Res. Commun.">
        <title>Molecular cloning of a novel immunoglobulin superfamily gene preferentially expressed by brain and testis.</title>
        <authorList>
            <person name="Suzu S."/>
            <person name="Hayashi Y."/>
            <person name="Harumi T."/>
            <person name="Nomaguchi K."/>
            <person name="Yamada M."/>
            <person name="Hayasawa H."/>
            <person name="Motoyoshi K."/>
        </authorList>
    </citation>
    <scope>NUCLEOTIDE SEQUENCE [MRNA]</scope>
    <scope>GLYCOSYLATION</scope>
    <scope>TOPOLOGY</scope>
    <scope>TISSUE SPECIFICITY</scope>
    <source>
        <tissue>Testis</tissue>
    </source>
</reference>
<reference key="2">
    <citation type="journal article" date="2004" name="Genome Res.">
        <title>The status, quality, and expansion of the NIH full-length cDNA project: the Mammalian Gene Collection (MGC).</title>
        <authorList>
            <consortium name="The MGC Project Team"/>
        </authorList>
    </citation>
    <scope>NUCLEOTIDE SEQUENCE [LARGE SCALE MRNA]</scope>
    <source>
        <tissue>Fetal brain</tissue>
    </source>
</reference>
<reference key="3">
    <citation type="journal article" date="2010" name="Cell">
        <title>A tissue-specific atlas of mouse protein phosphorylation and expression.</title>
        <authorList>
            <person name="Huttlin E.L."/>
            <person name="Jedrychowski M.P."/>
            <person name="Elias J.E."/>
            <person name="Goswami T."/>
            <person name="Rad R."/>
            <person name="Beausoleil S.A."/>
            <person name="Villen J."/>
            <person name="Haas W."/>
            <person name="Sowa M.E."/>
            <person name="Gygi S.P."/>
        </authorList>
    </citation>
    <scope>IDENTIFICATION BY MASS SPECTROMETRY [LARGE SCALE ANALYSIS]</scope>
    <source>
        <tissue>Pancreas</tissue>
    </source>
</reference>
<reference key="4">
    <citation type="journal article" date="2014" name="Mol. Cell. Proteomics">
        <title>Immunoaffinity enrichment and mass spectrometry analysis of protein methylation.</title>
        <authorList>
            <person name="Guo A."/>
            <person name="Gu H."/>
            <person name="Zhou J."/>
            <person name="Mulhern D."/>
            <person name="Wang Y."/>
            <person name="Lee K.A."/>
            <person name="Yang V."/>
            <person name="Aguiar M."/>
            <person name="Kornhauser J."/>
            <person name="Jia X."/>
            <person name="Ren J."/>
            <person name="Beausoleil S.A."/>
            <person name="Silva J.C."/>
            <person name="Vemulapalli V."/>
            <person name="Bedford M.T."/>
            <person name="Comb M.J."/>
        </authorList>
    </citation>
    <scope>METHYLATION [LARGE SCALE ANALYSIS] AT ARG-375</scope>
    <scope>IDENTIFICATION BY MASS SPECTROMETRY [LARGE SCALE ANALYSIS]</scope>
    <source>
        <tissue>Brain</tissue>
    </source>
</reference>
<gene>
    <name type="primary">Igsf11</name>
</gene>
<dbReference type="EMBL" id="AB079880">
    <property type="protein sequence ID" value="BAC07547.1"/>
    <property type="molecule type" value="mRNA"/>
</dbReference>
<dbReference type="EMBL" id="BC057555">
    <property type="protein sequence ID" value="AAH57555.1"/>
    <property type="molecule type" value="mRNA"/>
</dbReference>
<dbReference type="CCDS" id="CCDS28175.1"/>
<dbReference type="RefSeq" id="NP_733548.2">
    <property type="nucleotide sequence ID" value="NM_170599.2"/>
</dbReference>
<dbReference type="SMR" id="P0C673"/>
<dbReference type="FunCoup" id="P0C673">
    <property type="interactions" value="236"/>
</dbReference>
<dbReference type="STRING" id="10090.ENSMUSP00000023478"/>
<dbReference type="GlyCosmos" id="P0C673">
    <property type="glycosylation" value="1 site, No reported glycans"/>
</dbReference>
<dbReference type="GlyGen" id="P0C673">
    <property type="glycosylation" value="4 sites, 1 N-linked glycan (1 site), 1 O-linked glycan (2 sites)"/>
</dbReference>
<dbReference type="iPTMnet" id="P0C673"/>
<dbReference type="PhosphoSitePlus" id="P0C673"/>
<dbReference type="PaxDb" id="10090-ENSMUSP00000023478"/>
<dbReference type="PeptideAtlas" id="P0C673"/>
<dbReference type="ProteomicsDB" id="269467"/>
<dbReference type="Antibodypedia" id="46572">
    <property type="antibodies" value="220 antibodies from 26 providers"/>
</dbReference>
<dbReference type="Ensembl" id="ENSMUST00000023478.8">
    <property type="protein sequence ID" value="ENSMUSP00000023478.8"/>
    <property type="gene ID" value="ENSMUSG00000022790.15"/>
</dbReference>
<dbReference type="GeneID" id="207683"/>
<dbReference type="KEGG" id="mmu:207683"/>
<dbReference type="UCSC" id="uc007zfp.1">
    <property type="organism name" value="mouse"/>
</dbReference>
<dbReference type="AGR" id="MGI:2388477"/>
<dbReference type="CTD" id="152404"/>
<dbReference type="MGI" id="MGI:2388477">
    <property type="gene designation" value="Igsf11"/>
</dbReference>
<dbReference type="VEuPathDB" id="HostDB:ENSMUSG00000022790"/>
<dbReference type="eggNOG" id="ENOG502QV48">
    <property type="taxonomic scope" value="Eukaryota"/>
</dbReference>
<dbReference type="GeneTree" id="ENSGT00940000156392"/>
<dbReference type="InParanoid" id="P0C673"/>
<dbReference type="OMA" id="CKGSSSW"/>
<dbReference type="OrthoDB" id="9932831at2759"/>
<dbReference type="PhylomeDB" id="P0C673"/>
<dbReference type="TreeFam" id="TF330875"/>
<dbReference type="BioGRID-ORCS" id="207683">
    <property type="hits" value="2 hits in 80 CRISPR screens"/>
</dbReference>
<dbReference type="ChiTaRS" id="Igsf11">
    <property type="organism name" value="mouse"/>
</dbReference>
<dbReference type="PRO" id="PR:P0C673"/>
<dbReference type="Proteomes" id="UP000000589">
    <property type="component" value="Chromosome 16"/>
</dbReference>
<dbReference type="RNAct" id="P0C673">
    <property type="molecule type" value="protein"/>
</dbReference>
<dbReference type="Bgee" id="ENSMUSG00000022790">
    <property type="expression patterns" value="Expressed in gastrula and 114 other cell types or tissues"/>
</dbReference>
<dbReference type="ExpressionAtlas" id="P0C673">
    <property type="expression patterns" value="baseline and differential"/>
</dbReference>
<dbReference type="GO" id="GO:0005911">
    <property type="term" value="C:cell-cell junction"/>
    <property type="evidence" value="ECO:0007669"/>
    <property type="project" value="Ensembl"/>
</dbReference>
<dbReference type="GO" id="GO:0005886">
    <property type="term" value="C:plasma membrane"/>
    <property type="evidence" value="ECO:0000266"/>
    <property type="project" value="MGI"/>
</dbReference>
<dbReference type="GO" id="GO:0045202">
    <property type="term" value="C:synapse"/>
    <property type="evidence" value="ECO:0007669"/>
    <property type="project" value="GOC"/>
</dbReference>
<dbReference type="GO" id="GO:0035255">
    <property type="term" value="F:ionotropic glutamate receptor binding"/>
    <property type="evidence" value="ECO:0007669"/>
    <property type="project" value="Ensembl"/>
</dbReference>
<dbReference type="GO" id="GO:0007156">
    <property type="term" value="P:homophilic cell adhesion via plasma membrane adhesion molecules"/>
    <property type="evidence" value="ECO:0000250"/>
    <property type="project" value="UniProtKB"/>
</dbReference>
<dbReference type="GO" id="GO:1900273">
    <property type="term" value="P:positive regulation of long-term synaptic potentiation"/>
    <property type="evidence" value="ECO:0000315"/>
    <property type="project" value="UniProtKB"/>
</dbReference>
<dbReference type="GO" id="GO:1905606">
    <property type="term" value="P:regulation of presynapse assembly"/>
    <property type="evidence" value="ECO:0000314"/>
    <property type="project" value="SynGO"/>
</dbReference>
<dbReference type="GO" id="GO:0048167">
    <property type="term" value="P:regulation of synaptic plasticity"/>
    <property type="evidence" value="ECO:0000315"/>
    <property type="project" value="UniProtKB"/>
</dbReference>
<dbReference type="GO" id="GO:0099537">
    <property type="term" value="P:trans-synaptic signaling"/>
    <property type="evidence" value="ECO:0000314"/>
    <property type="project" value="SynGO"/>
</dbReference>
<dbReference type="FunFam" id="2.60.40.10:FF:000595">
    <property type="entry name" value="Immunoglobulin superfamily member 11"/>
    <property type="match status" value="1"/>
</dbReference>
<dbReference type="FunFam" id="2.60.40.10:FF:000095">
    <property type="entry name" value="immunoglobulin superfamily member 11 isoform X1"/>
    <property type="match status" value="1"/>
</dbReference>
<dbReference type="Gene3D" id="2.60.40.10">
    <property type="entry name" value="Immunoglobulins"/>
    <property type="match status" value="2"/>
</dbReference>
<dbReference type="InterPro" id="IPR007110">
    <property type="entry name" value="Ig-like_dom"/>
</dbReference>
<dbReference type="InterPro" id="IPR036179">
    <property type="entry name" value="Ig-like_dom_sf"/>
</dbReference>
<dbReference type="InterPro" id="IPR013783">
    <property type="entry name" value="Ig-like_fold"/>
</dbReference>
<dbReference type="InterPro" id="IPR003599">
    <property type="entry name" value="Ig_sub"/>
</dbReference>
<dbReference type="InterPro" id="IPR003598">
    <property type="entry name" value="Ig_sub2"/>
</dbReference>
<dbReference type="InterPro" id="IPR013106">
    <property type="entry name" value="Ig_V-set"/>
</dbReference>
<dbReference type="InterPro" id="IPR042758">
    <property type="entry name" value="IGSF11"/>
</dbReference>
<dbReference type="PANTHER" id="PTHR44699">
    <property type="entry name" value="IMMUNOGLOBULIN SUPERFAMILY MEMBER 11"/>
    <property type="match status" value="1"/>
</dbReference>
<dbReference type="PANTHER" id="PTHR44699:SF1">
    <property type="entry name" value="IMMUNOGLOBULIN SUPERFAMILY MEMBER 11"/>
    <property type="match status" value="1"/>
</dbReference>
<dbReference type="Pfam" id="PF13927">
    <property type="entry name" value="Ig_3"/>
    <property type="match status" value="1"/>
</dbReference>
<dbReference type="Pfam" id="PF07686">
    <property type="entry name" value="V-set"/>
    <property type="match status" value="1"/>
</dbReference>
<dbReference type="SMART" id="SM00409">
    <property type="entry name" value="IG"/>
    <property type="match status" value="2"/>
</dbReference>
<dbReference type="SMART" id="SM00408">
    <property type="entry name" value="IGc2"/>
    <property type="match status" value="1"/>
</dbReference>
<dbReference type="SUPFAM" id="SSF48726">
    <property type="entry name" value="Immunoglobulin"/>
    <property type="match status" value="2"/>
</dbReference>
<dbReference type="PROSITE" id="PS50835">
    <property type="entry name" value="IG_LIKE"/>
    <property type="match status" value="2"/>
</dbReference>
<proteinExistence type="evidence at protein level"/>
<keyword id="KW-0130">Cell adhesion</keyword>
<keyword id="KW-1003">Cell membrane</keyword>
<keyword id="KW-1015">Disulfide bond</keyword>
<keyword id="KW-0325">Glycoprotein</keyword>
<keyword id="KW-0341">Growth regulation</keyword>
<keyword id="KW-0393">Immunoglobulin domain</keyword>
<keyword id="KW-0472">Membrane</keyword>
<keyword id="KW-0488">Methylation</keyword>
<keyword id="KW-0675">Receptor</keyword>
<keyword id="KW-1185">Reference proteome</keyword>
<keyword id="KW-0677">Repeat</keyword>
<keyword id="KW-0732">Signal</keyword>
<keyword id="KW-0812">Transmembrane</keyword>
<keyword id="KW-1133">Transmembrane helix</keyword>
<sequence>MTRRRSAPASWLLVSLLGVATSLEVSESPGSVQVARGQTAVLPCAFSTSAALLNLNVIWMVIPLSNANQPEQVILYQGGQMFDGALRFHGRVGFTGTMPATNVSIFINNTQLSDTGTYQCLVNNLPDRGGRNIGVTGLTVLVPPSAPQCQIQGSQDLGSDVILLCSSEEGIPRPTYLWEKLDNTLKLPPTATQDQVQGTVTIRNISALSSGLYQCVASNAIGTSTCLLDLQVISPQPRSVGVIAGAVGTGAVLIVICLALISGAFFYWRSKNKEEEEEEIPNEIREDDLPPKCSSAKAFHTEISSSENNTLTSSNTYNSRYWNNNPKPHRNTESFNHFSDLRQSFSGNAVIPSIYANGNHLVLGPHKTLVVTANRGSSPQVLPRNNGSVSRKPWPQHTHSYTVSQMTLERIGAVPVMVPAQSRAGSLV</sequence>
<organism>
    <name type="scientific">Mus musculus</name>
    <name type="common">Mouse</name>
    <dbReference type="NCBI Taxonomy" id="10090"/>
    <lineage>
        <taxon>Eukaryota</taxon>
        <taxon>Metazoa</taxon>
        <taxon>Chordata</taxon>
        <taxon>Craniata</taxon>
        <taxon>Vertebrata</taxon>
        <taxon>Euteleostomi</taxon>
        <taxon>Mammalia</taxon>
        <taxon>Eutheria</taxon>
        <taxon>Euarchontoglires</taxon>
        <taxon>Glires</taxon>
        <taxon>Rodentia</taxon>
        <taxon>Myomorpha</taxon>
        <taxon>Muroidea</taxon>
        <taxon>Muridae</taxon>
        <taxon>Murinae</taxon>
        <taxon>Mus</taxon>
        <taxon>Mus</taxon>
    </lineage>
</organism>
<name>IGS11_MOUSE</name>
<evidence type="ECO:0000250" key="1"/>
<evidence type="ECO:0000255" key="2"/>
<evidence type="ECO:0000255" key="3">
    <source>
        <dbReference type="PROSITE-ProRule" id="PRU00114"/>
    </source>
</evidence>
<evidence type="ECO:0000256" key="4">
    <source>
        <dbReference type="SAM" id="MobiDB-lite"/>
    </source>
</evidence>
<evidence type="ECO:0000269" key="5">
    <source>
    </source>
</evidence>
<evidence type="ECO:0000305" key="6"/>
<evidence type="ECO:0007744" key="7">
    <source>
    </source>
</evidence>
<feature type="signal peptide" evidence="2">
    <location>
        <begin position="1"/>
        <end position="22"/>
    </location>
</feature>
<feature type="chain" id="PRO_0000317371" description="Immunoglobulin superfamily member 11">
    <location>
        <begin position="23"/>
        <end position="428"/>
    </location>
</feature>
<feature type="topological domain" description="Extracellular" evidence="2">
    <location>
        <begin position="23"/>
        <end position="240"/>
    </location>
</feature>
<feature type="transmembrane region" description="Helical" evidence="2">
    <location>
        <begin position="241"/>
        <end position="261"/>
    </location>
</feature>
<feature type="topological domain" description="Cytoplasmic" evidence="2">
    <location>
        <begin position="262"/>
        <end position="428"/>
    </location>
</feature>
<feature type="domain" description="Ig-like V-type">
    <location>
        <begin position="23"/>
        <end position="136"/>
    </location>
</feature>
<feature type="domain" description="Ig-like C2-type">
    <location>
        <begin position="144"/>
        <end position="234"/>
    </location>
</feature>
<feature type="region of interest" description="Disordered" evidence="4">
    <location>
        <begin position="376"/>
        <end position="396"/>
    </location>
</feature>
<feature type="compositionally biased region" description="Polar residues" evidence="4">
    <location>
        <begin position="376"/>
        <end position="389"/>
    </location>
</feature>
<feature type="modified residue" description="Omega-N-methylarginine" evidence="7">
    <location>
        <position position="375"/>
    </location>
</feature>
<feature type="glycosylation site" description="N-linked (GlcNAc...) asparagine" evidence="2">
    <location>
        <position position="102"/>
    </location>
</feature>
<feature type="disulfide bond" evidence="3">
    <location>
        <begin position="44"/>
        <end position="120"/>
    </location>
</feature>
<feature type="disulfide bond" evidence="3">
    <location>
        <begin position="165"/>
        <end position="215"/>
    </location>
</feature>
<feature type="sequence conflict" description="In Ref. 1; BAC07547." evidence="6" ref="1">
    <original>A</original>
    <variation>P</variation>
    <location>
        <position position="349"/>
    </location>
</feature>
<protein>
    <recommendedName>
        <fullName>Immunoglobulin superfamily member 11</fullName>
        <shortName>IgSF11</shortName>
    </recommendedName>
    <alternativeName>
        <fullName>Brain and testis-specific immunoglobulin superfamily protein</fullName>
        <shortName>Bt-IGSF</shortName>
    </alternativeName>
</protein>
<comment type="function">
    <text evidence="1">Functions as a cell adhesion molecule through homophilic interaction. Stimulates cell growth (By similarity).</text>
</comment>
<comment type="subcellular location">
    <subcellularLocation>
        <location>Cell membrane</location>
        <topology>Single-pass type I membrane protein</topology>
    </subcellularLocation>
</comment>
<comment type="tissue specificity">
    <text evidence="5">Highly expressed in testis and detected in kidney and adrenal gland. In brain, expressed in commissure fibers of the corpus callosum and pyramidal cell layers of the dentate gyrus and hippocampus where it is probably expressed by both neurons and glial cells.</text>
</comment>
<comment type="PTM">
    <text evidence="5">N-glycosylated.</text>
</comment>